<sequence length="477" mass="51890">MPPSDTQSPAANNAHEFSVSEISFALKKTVEETFGHVRVRGEITGYRGPHSSGHCYFGLKDDKARMDAVIWKGNFGKLRFKPEEGMEVIATGKLTTYPGSSKYQIVIDHLEPAGVGALMALLEERRKKLAAEGLFAAERKRALPFLPEVIGVVTSPTGAVIRDILHRLQDRFPRHVIVWPVRVQGETSAAEVAAAIRGFNAMEKGGKTPRPDLLIIARGGGSIEDLWSFNEEIVVRAAAESAIPLISAIGHETDTTLIDFASDRRAPTPTAAAEMAVPVRAELLADVRDKGSRLIRCEARAIESYRTQLGGLARGLPKLQDLVALPRQRFDTAADRLGRALIRAAEVKRARLSRVEGRLSDRPIRLRIANERKGLPQLLQRLTRAETRRVADLARSLDGSTKLLESYSYHGVLKRGYAVVRDETGKPIRAGAGQTAGARIEIEFAEDRLDAVVAPGGTVAPRKAPPKKPGGGQGSLL</sequence>
<dbReference type="EC" id="3.1.11.6" evidence="1"/>
<dbReference type="EMBL" id="CP000774">
    <property type="protein sequence ID" value="ABS62243.1"/>
    <property type="molecule type" value="Genomic_DNA"/>
</dbReference>
<dbReference type="RefSeq" id="WP_011995534.1">
    <property type="nucleotide sequence ID" value="NC_009719.1"/>
</dbReference>
<dbReference type="SMR" id="A7HQR0"/>
<dbReference type="STRING" id="402881.Plav_0620"/>
<dbReference type="KEGG" id="pla:Plav_0620"/>
<dbReference type="eggNOG" id="COG1570">
    <property type="taxonomic scope" value="Bacteria"/>
</dbReference>
<dbReference type="HOGENOM" id="CLU_023625_3_1_5"/>
<dbReference type="OrthoDB" id="9802795at2"/>
<dbReference type="Proteomes" id="UP000006377">
    <property type="component" value="Chromosome"/>
</dbReference>
<dbReference type="GO" id="GO:0005737">
    <property type="term" value="C:cytoplasm"/>
    <property type="evidence" value="ECO:0007669"/>
    <property type="project" value="UniProtKB-SubCell"/>
</dbReference>
<dbReference type="GO" id="GO:0009318">
    <property type="term" value="C:exodeoxyribonuclease VII complex"/>
    <property type="evidence" value="ECO:0007669"/>
    <property type="project" value="InterPro"/>
</dbReference>
<dbReference type="GO" id="GO:0008855">
    <property type="term" value="F:exodeoxyribonuclease VII activity"/>
    <property type="evidence" value="ECO:0007669"/>
    <property type="project" value="UniProtKB-UniRule"/>
</dbReference>
<dbReference type="GO" id="GO:0003676">
    <property type="term" value="F:nucleic acid binding"/>
    <property type="evidence" value="ECO:0007669"/>
    <property type="project" value="InterPro"/>
</dbReference>
<dbReference type="GO" id="GO:0006308">
    <property type="term" value="P:DNA catabolic process"/>
    <property type="evidence" value="ECO:0007669"/>
    <property type="project" value="UniProtKB-UniRule"/>
</dbReference>
<dbReference type="CDD" id="cd04489">
    <property type="entry name" value="ExoVII_LU_OBF"/>
    <property type="match status" value="1"/>
</dbReference>
<dbReference type="HAMAP" id="MF_00378">
    <property type="entry name" value="Exonuc_7_L"/>
    <property type="match status" value="1"/>
</dbReference>
<dbReference type="InterPro" id="IPR003753">
    <property type="entry name" value="Exonuc_VII_L"/>
</dbReference>
<dbReference type="InterPro" id="IPR020579">
    <property type="entry name" value="Exonuc_VII_lsu_C"/>
</dbReference>
<dbReference type="InterPro" id="IPR025824">
    <property type="entry name" value="OB-fold_nuc-bd_dom"/>
</dbReference>
<dbReference type="NCBIfam" id="TIGR00237">
    <property type="entry name" value="xseA"/>
    <property type="match status" value="1"/>
</dbReference>
<dbReference type="PANTHER" id="PTHR30008">
    <property type="entry name" value="EXODEOXYRIBONUCLEASE 7 LARGE SUBUNIT"/>
    <property type="match status" value="1"/>
</dbReference>
<dbReference type="PANTHER" id="PTHR30008:SF0">
    <property type="entry name" value="EXODEOXYRIBONUCLEASE 7 LARGE SUBUNIT"/>
    <property type="match status" value="1"/>
</dbReference>
<dbReference type="Pfam" id="PF02601">
    <property type="entry name" value="Exonuc_VII_L"/>
    <property type="match status" value="1"/>
</dbReference>
<dbReference type="Pfam" id="PF13742">
    <property type="entry name" value="tRNA_anti_2"/>
    <property type="match status" value="1"/>
</dbReference>
<protein>
    <recommendedName>
        <fullName evidence="1">Exodeoxyribonuclease 7 large subunit</fullName>
        <ecNumber evidence="1">3.1.11.6</ecNumber>
    </recommendedName>
    <alternativeName>
        <fullName evidence="1">Exodeoxyribonuclease VII large subunit</fullName>
        <shortName evidence="1">Exonuclease VII large subunit</shortName>
    </alternativeName>
</protein>
<comment type="function">
    <text evidence="1">Bidirectionally degrades single-stranded DNA into large acid-insoluble oligonucleotides, which are then degraded further into small acid-soluble oligonucleotides.</text>
</comment>
<comment type="catalytic activity">
    <reaction evidence="1">
        <text>Exonucleolytic cleavage in either 5'- to 3'- or 3'- to 5'-direction to yield nucleoside 5'-phosphates.</text>
        <dbReference type="EC" id="3.1.11.6"/>
    </reaction>
</comment>
<comment type="subunit">
    <text evidence="1">Heterooligomer composed of large and small subunits.</text>
</comment>
<comment type="subcellular location">
    <subcellularLocation>
        <location evidence="1">Cytoplasm</location>
    </subcellularLocation>
</comment>
<comment type="similarity">
    <text evidence="1">Belongs to the XseA family.</text>
</comment>
<keyword id="KW-0963">Cytoplasm</keyword>
<keyword id="KW-0269">Exonuclease</keyword>
<keyword id="KW-0378">Hydrolase</keyword>
<keyword id="KW-0540">Nuclease</keyword>
<keyword id="KW-1185">Reference proteome</keyword>
<gene>
    <name evidence="1" type="primary">xseA</name>
    <name type="ordered locus">Plav_0620</name>
</gene>
<organism>
    <name type="scientific">Parvibaculum lavamentivorans (strain DS-1 / DSM 13023 / NCIMB 13966)</name>
    <dbReference type="NCBI Taxonomy" id="402881"/>
    <lineage>
        <taxon>Bacteria</taxon>
        <taxon>Pseudomonadati</taxon>
        <taxon>Pseudomonadota</taxon>
        <taxon>Alphaproteobacteria</taxon>
        <taxon>Hyphomicrobiales</taxon>
        <taxon>Parvibaculaceae</taxon>
        <taxon>Parvibaculum</taxon>
    </lineage>
</organism>
<accession>A7HQR0</accession>
<proteinExistence type="inferred from homology"/>
<reference key="1">
    <citation type="journal article" date="2011" name="Stand. Genomic Sci.">
        <title>Complete genome sequence of Parvibaculum lavamentivorans type strain (DS-1(T)).</title>
        <authorList>
            <person name="Schleheck D."/>
            <person name="Weiss M."/>
            <person name="Pitluck S."/>
            <person name="Bruce D."/>
            <person name="Land M.L."/>
            <person name="Han S."/>
            <person name="Saunders E."/>
            <person name="Tapia R."/>
            <person name="Detter C."/>
            <person name="Brettin T."/>
            <person name="Han J."/>
            <person name="Woyke T."/>
            <person name="Goodwin L."/>
            <person name="Pennacchio L."/>
            <person name="Nolan M."/>
            <person name="Cook A.M."/>
            <person name="Kjelleberg S."/>
            <person name="Thomas T."/>
        </authorList>
    </citation>
    <scope>NUCLEOTIDE SEQUENCE [LARGE SCALE GENOMIC DNA]</scope>
    <source>
        <strain>DS-1 / DSM 13023 / NCIMB 13966</strain>
    </source>
</reference>
<evidence type="ECO:0000255" key="1">
    <source>
        <dbReference type="HAMAP-Rule" id="MF_00378"/>
    </source>
</evidence>
<evidence type="ECO:0000256" key="2">
    <source>
        <dbReference type="SAM" id="MobiDB-lite"/>
    </source>
</evidence>
<feature type="chain" id="PRO_1000072162" description="Exodeoxyribonuclease 7 large subunit">
    <location>
        <begin position="1"/>
        <end position="477"/>
    </location>
</feature>
<feature type="region of interest" description="Disordered" evidence="2">
    <location>
        <begin position="456"/>
        <end position="477"/>
    </location>
</feature>
<name>EX7L_PARL1</name>